<proteinExistence type="inferred from homology"/>
<name>SGMA_DICDI</name>
<keyword id="KW-1015">Disulfide bond</keyword>
<keyword id="KW-0325">Glycoprotein</keyword>
<keyword id="KW-0326">Glycosidase</keyword>
<keyword id="KW-0378">Hydrolase</keyword>
<keyword id="KW-0479">Metal-binding</keyword>
<keyword id="KW-1185">Reference proteome</keyword>
<keyword id="KW-0964">Secreted</keyword>
<keyword id="KW-0732">Signal</keyword>
<keyword id="KW-0862">Zinc</keyword>
<protein>
    <recommendedName>
        <fullName>Sphingomyelin phosphodiesterase A</fullName>
        <ecNumber>3.1.4.-</ecNumber>
    </recommendedName>
    <alternativeName>
        <fullName>Acid sphingomyelinase A</fullName>
        <shortName>aSMase A</shortName>
    </alternativeName>
</protein>
<accession>Q55C09</accession>
<dbReference type="EC" id="3.1.4.-"/>
<dbReference type="EMBL" id="AAFI02000005">
    <property type="protein sequence ID" value="EAL72767.1"/>
    <property type="molecule type" value="Genomic_DNA"/>
</dbReference>
<dbReference type="RefSeq" id="XP_646672.1">
    <property type="nucleotide sequence ID" value="XM_641580.1"/>
</dbReference>
<dbReference type="SMR" id="Q55C09"/>
<dbReference type="STRING" id="44689.Q55C09"/>
<dbReference type="GlyCosmos" id="Q55C09">
    <property type="glycosylation" value="7 sites, No reported glycans"/>
</dbReference>
<dbReference type="GlyGen" id="Q55C09">
    <property type="glycosylation" value="7 sites"/>
</dbReference>
<dbReference type="PaxDb" id="44689-DDB0216178"/>
<dbReference type="EnsemblProtists" id="EAL72767">
    <property type="protein sequence ID" value="EAL72767"/>
    <property type="gene ID" value="DDB_G0270834"/>
</dbReference>
<dbReference type="GeneID" id="8617646"/>
<dbReference type="KEGG" id="ddi:DDB_G0270834"/>
<dbReference type="dictyBase" id="DDB_G0270834">
    <property type="gene designation" value="sgmA"/>
</dbReference>
<dbReference type="VEuPathDB" id="AmoebaDB:DDB_G0270834"/>
<dbReference type="eggNOG" id="KOG3770">
    <property type="taxonomic scope" value="Eukaryota"/>
</dbReference>
<dbReference type="HOGENOM" id="CLU_014743_3_0_1"/>
<dbReference type="InParanoid" id="Q55C09"/>
<dbReference type="OMA" id="GNFWHIT"/>
<dbReference type="PhylomeDB" id="Q55C09"/>
<dbReference type="Reactome" id="R-DDI-9840310">
    <property type="pathway name" value="Glycosphingolipid catabolism"/>
</dbReference>
<dbReference type="PRO" id="PR:Q55C09"/>
<dbReference type="Proteomes" id="UP000002195">
    <property type="component" value="Chromosome 1"/>
</dbReference>
<dbReference type="GO" id="GO:0005576">
    <property type="term" value="C:extracellular region"/>
    <property type="evidence" value="ECO:0007669"/>
    <property type="project" value="UniProtKB-SubCell"/>
</dbReference>
<dbReference type="GO" id="GO:0016020">
    <property type="term" value="C:membrane"/>
    <property type="evidence" value="ECO:0007669"/>
    <property type="project" value="GOC"/>
</dbReference>
<dbReference type="GO" id="GO:0016798">
    <property type="term" value="F:hydrolase activity, acting on glycosyl bonds"/>
    <property type="evidence" value="ECO:0007669"/>
    <property type="project" value="UniProtKB-KW"/>
</dbReference>
<dbReference type="GO" id="GO:0046872">
    <property type="term" value="F:metal ion binding"/>
    <property type="evidence" value="ECO:0007669"/>
    <property type="project" value="UniProtKB-KW"/>
</dbReference>
<dbReference type="GO" id="GO:0004767">
    <property type="term" value="F:sphingomyelin phosphodiesterase activity"/>
    <property type="evidence" value="ECO:0000250"/>
    <property type="project" value="dictyBase"/>
</dbReference>
<dbReference type="GO" id="GO:0046513">
    <property type="term" value="P:ceramide biosynthetic process"/>
    <property type="evidence" value="ECO:0000250"/>
    <property type="project" value="dictyBase"/>
</dbReference>
<dbReference type="GO" id="GO:0006685">
    <property type="term" value="P:sphingomyelin catabolic process"/>
    <property type="evidence" value="ECO:0000250"/>
    <property type="project" value="dictyBase"/>
</dbReference>
<dbReference type="CDD" id="cd00842">
    <property type="entry name" value="MPP_ASMase"/>
    <property type="match status" value="1"/>
</dbReference>
<dbReference type="FunFam" id="1.10.225.10:FF:000010">
    <property type="entry name" value="Sphingomyelin phosphodiesterase"/>
    <property type="match status" value="1"/>
</dbReference>
<dbReference type="FunFam" id="3.60.21.10:FF:000275">
    <property type="entry name" value="Sphingomyelin phosphodiesterase A"/>
    <property type="match status" value="1"/>
</dbReference>
<dbReference type="Gene3D" id="3.60.21.10">
    <property type="match status" value="1"/>
</dbReference>
<dbReference type="Gene3D" id="1.10.225.10">
    <property type="entry name" value="Saposin-like"/>
    <property type="match status" value="1"/>
</dbReference>
<dbReference type="InterPro" id="IPR045473">
    <property type="entry name" value="ASM_C"/>
</dbReference>
<dbReference type="InterPro" id="IPR041805">
    <property type="entry name" value="ASMase/PPN1_MPP"/>
</dbReference>
<dbReference type="InterPro" id="IPR004843">
    <property type="entry name" value="Calcineurin-like_PHP_ApaH"/>
</dbReference>
<dbReference type="InterPro" id="IPR029052">
    <property type="entry name" value="Metallo-depent_PP-like"/>
</dbReference>
<dbReference type="InterPro" id="IPR007856">
    <property type="entry name" value="SapB_1"/>
</dbReference>
<dbReference type="InterPro" id="IPR011001">
    <property type="entry name" value="Saposin-like"/>
</dbReference>
<dbReference type="InterPro" id="IPR008139">
    <property type="entry name" value="SaposinB_dom"/>
</dbReference>
<dbReference type="InterPro" id="IPR011160">
    <property type="entry name" value="Sphingomy_PDE"/>
</dbReference>
<dbReference type="PANTHER" id="PTHR10340">
    <property type="entry name" value="SPHINGOMYELIN PHOSPHODIESTERASE"/>
    <property type="match status" value="1"/>
</dbReference>
<dbReference type="PANTHER" id="PTHR10340:SF58">
    <property type="entry name" value="SPHINGOMYELIN PHOSPHODIESTERASE A"/>
    <property type="match status" value="1"/>
</dbReference>
<dbReference type="Pfam" id="PF19272">
    <property type="entry name" value="ASMase_C"/>
    <property type="match status" value="1"/>
</dbReference>
<dbReference type="Pfam" id="PF00149">
    <property type="entry name" value="Metallophos"/>
    <property type="match status" value="1"/>
</dbReference>
<dbReference type="Pfam" id="PF05184">
    <property type="entry name" value="SapB_1"/>
    <property type="match status" value="1"/>
</dbReference>
<dbReference type="PIRSF" id="PIRSF000948">
    <property type="entry name" value="Sphingomy_PDE"/>
    <property type="match status" value="1"/>
</dbReference>
<dbReference type="SMART" id="SM00741">
    <property type="entry name" value="SapB"/>
    <property type="match status" value="1"/>
</dbReference>
<dbReference type="SUPFAM" id="SSF56300">
    <property type="entry name" value="Metallo-dependent phosphatases"/>
    <property type="match status" value="1"/>
</dbReference>
<dbReference type="SUPFAM" id="SSF47862">
    <property type="entry name" value="Saposin"/>
    <property type="match status" value="1"/>
</dbReference>
<dbReference type="PROSITE" id="PS50015">
    <property type="entry name" value="SAP_B"/>
    <property type="match status" value="1"/>
</dbReference>
<comment type="function">
    <text evidence="1">Converts sphingomyelin to ceramide.</text>
</comment>
<comment type="cofactor">
    <cofactor evidence="2">
        <name>Zn(2+)</name>
        <dbReference type="ChEBI" id="CHEBI:29105"/>
    </cofactor>
    <text evidence="2">Binds 2 Zn(2+) per subunit.</text>
</comment>
<comment type="subcellular location">
    <subcellularLocation>
        <location evidence="5">Secreted</location>
    </subcellularLocation>
</comment>
<comment type="similarity">
    <text evidence="5">Belongs to the acid sphingomyelinase family.</text>
</comment>
<organism>
    <name type="scientific">Dictyostelium discoideum</name>
    <name type="common">Social amoeba</name>
    <dbReference type="NCBI Taxonomy" id="44689"/>
    <lineage>
        <taxon>Eukaryota</taxon>
        <taxon>Amoebozoa</taxon>
        <taxon>Evosea</taxon>
        <taxon>Eumycetozoa</taxon>
        <taxon>Dictyostelia</taxon>
        <taxon>Dictyosteliales</taxon>
        <taxon>Dictyosteliaceae</taxon>
        <taxon>Dictyostelium</taxon>
    </lineage>
</organism>
<feature type="signal peptide" evidence="3">
    <location>
        <begin position="1"/>
        <end position="21"/>
    </location>
</feature>
<feature type="chain" id="PRO_0000327564" description="Sphingomyelin phosphodiesterase A">
    <location>
        <begin position="22"/>
        <end position="583"/>
    </location>
</feature>
<feature type="domain" description="Saposin B-type" evidence="4">
    <location>
        <begin position="51"/>
        <end position="133"/>
    </location>
</feature>
<feature type="binding site" evidence="2">
    <location>
        <position position="193"/>
    </location>
    <ligand>
        <name>Zn(2+)</name>
        <dbReference type="ChEBI" id="CHEBI:29105"/>
        <label>1</label>
    </ligand>
</feature>
<feature type="binding site" evidence="2">
    <location>
        <position position="195"/>
    </location>
    <ligand>
        <name>Zn(2+)</name>
        <dbReference type="ChEBI" id="CHEBI:29105"/>
        <label>1</label>
    </ligand>
</feature>
<feature type="binding site" evidence="2">
    <location>
        <position position="258"/>
    </location>
    <ligand>
        <name>Zn(2+)</name>
        <dbReference type="ChEBI" id="CHEBI:29105"/>
        <label>1</label>
    </ligand>
</feature>
<feature type="binding site" evidence="2">
    <location>
        <position position="258"/>
    </location>
    <ligand>
        <name>Zn(2+)</name>
        <dbReference type="ChEBI" id="CHEBI:29105"/>
        <label>2</label>
    </ligand>
</feature>
<feature type="binding site" evidence="2">
    <location>
        <position position="298"/>
    </location>
    <ligand>
        <name>Zn(2+)</name>
        <dbReference type="ChEBI" id="CHEBI:29105"/>
        <label>2</label>
    </ligand>
</feature>
<feature type="binding site" evidence="2">
    <location>
        <position position="401"/>
    </location>
    <ligand>
        <name>Zn(2+)</name>
        <dbReference type="ChEBI" id="CHEBI:29105"/>
        <label>2</label>
    </ligand>
</feature>
<feature type="binding site" evidence="2">
    <location>
        <position position="436"/>
    </location>
    <ligand>
        <name>Zn(2+)</name>
        <dbReference type="ChEBI" id="CHEBI:29105"/>
        <label>2</label>
    </ligand>
</feature>
<feature type="binding site" evidence="2">
    <location>
        <position position="438"/>
    </location>
    <ligand>
        <name>Zn(2+)</name>
        <dbReference type="ChEBI" id="CHEBI:29105"/>
        <label>1</label>
    </ligand>
</feature>
<feature type="glycosylation site" description="N-linked (GlcNAc...) asparagine" evidence="4">
    <location>
        <position position="72"/>
    </location>
</feature>
<feature type="glycosylation site" description="N-linked (GlcNAc...) asparagine" evidence="4">
    <location>
        <position position="182"/>
    </location>
</feature>
<feature type="glycosylation site" description="N-linked (GlcNAc...) asparagine" evidence="4">
    <location>
        <position position="377"/>
    </location>
</feature>
<feature type="glycosylation site" description="N-linked (GlcNAc...) asparagine" evidence="4">
    <location>
        <position position="495"/>
    </location>
</feature>
<feature type="glycosylation site" description="N-linked (GlcNAc...) asparagine" evidence="4">
    <location>
        <position position="500"/>
    </location>
</feature>
<feature type="glycosylation site" description="N-linked (GlcNAc...) asparagine" evidence="4">
    <location>
        <position position="537"/>
    </location>
</feature>
<feature type="glycosylation site" description="N-linked (GlcNAc...) asparagine" evidence="4">
    <location>
        <position position="547"/>
    </location>
</feature>
<feature type="disulfide bond" evidence="4">
    <location>
        <begin position="55"/>
        <end position="129"/>
    </location>
</feature>
<feature type="disulfide bond" evidence="4">
    <location>
        <begin position="58"/>
        <end position="123"/>
    </location>
</feature>
<feature type="disulfide bond" evidence="4">
    <location>
        <begin position="86"/>
        <end position="97"/>
    </location>
</feature>
<feature type="disulfide bond" evidence="2">
    <location>
        <begin position="214"/>
        <end position="229"/>
    </location>
</feature>
<feature type="disulfide bond" evidence="2">
    <location>
        <begin position="567"/>
        <end position="580"/>
    </location>
</feature>
<evidence type="ECO:0000250" key="1"/>
<evidence type="ECO:0000250" key="2">
    <source>
        <dbReference type="UniProtKB" id="Q92484"/>
    </source>
</evidence>
<evidence type="ECO:0000255" key="3"/>
<evidence type="ECO:0000255" key="4">
    <source>
        <dbReference type="PROSITE-ProRule" id="PRU00415"/>
    </source>
</evidence>
<evidence type="ECO:0000305" key="5"/>
<gene>
    <name type="primary">sgmA</name>
    <name type="ORF">DDB_G0270834</name>
</gene>
<sequence length="583" mass="65327">MKSIPIILLVLIGLLLASVYSHDILITEKGQKSLDKLDKAAATTLQHGENIQLSCDVCQIGASLLEDFIKKNASLTEIIKGLSDLCIASKEEQPEVCTGILNNYVPIIVDVLIQSDFTPSQLCGYFKICSATGSSESSSISNSFDNEYRQESFNKPTMKVNKKPQYKDLSNQEPLVKKFKGNDSIGYILQISDVHFDPDYKVGSNPNCGRPLCCRDGVGSAGPIGHYLCDIPFSTVELIFQHLATLTDQLDFIVWTGDNPPHNVWEQSQAQQELATATLAQVIQKTFPNTPVLPSLGNHEAYPADQYVLPNSQWLLDSIYTYWAPWLDADALELVKERGYYTSLIKPGLRVMSLNTLENDMINFYNLLPTYLKGPNNQSDWMINTLEQAQSNGEKVLIIGHIPCTVKSASTDGWCAMYEQVVGQFSDVIIGQLYGHTHYDQFSVFSDVATHTIPTGMNYIVPSLTTYQNHEPGYRIYQFDYSTNQIVNYYQYHANITEANETGALNFQLTYSAKELYNMDDLSPTSWTKVANQMKTNSTMFNSYFENLSSSPIKESCDQACQTKWICQIFGITSSEFDKCYGV</sequence>
<reference key="1">
    <citation type="journal article" date="2005" name="Nature">
        <title>The genome of the social amoeba Dictyostelium discoideum.</title>
        <authorList>
            <person name="Eichinger L."/>
            <person name="Pachebat J.A."/>
            <person name="Gloeckner G."/>
            <person name="Rajandream M.A."/>
            <person name="Sucgang R."/>
            <person name="Berriman M."/>
            <person name="Song J."/>
            <person name="Olsen R."/>
            <person name="Szafranski K."/>
            <person name="Xu Q."/>
            <person name="Tunggal B."/>
            <person name="Kummerfeld S."/>
            <person name="Madera M."/>
            <person name="Konfortov B.A."/>
            <person name="Rivero F."/>
            <person name="Bankier A.T."/>
            <person name="Lehmann R."/>
            <person name="Hamlin N."/>
            <person name="Davies R."/>
            <person name="Gaudet P."/>
            <person name="Fey P."/>
            <person name="Pilcher K."/>
            <person name="Chen G."/>
            <person name="Saunders D."/>
            <person name="Sodergren E.J."/>
            <person name="Davis P."/>
            <person name="Kerhornou A."/>
            <person name="Nie X."/>
            <person name="Hall N."/>
            <person name="Anjard C."/>
            <person name="Hemphill L."/>
            <person name="Bason N."/>
            <person name="Farbrother P."/>
            <person name="Desany B."/>
            <person name="Just E."/>
            <person name="Morio T."/>
            <person name="Rost R."/>
            <person name="Churcher C.M."/>
            <person name="Cooper J."/>
            <person name="Haydock S."/>
            <person name="van Driessche N."/>
            <person name="Cronin A."/>
            <person name="Goodhead I."/>
            <person name="Muzny D.M."/>
            <person name="Mourier T."/>
            <person name="Pain A."/>
            <person name="Lu M."/>
            <person name="Harper D."/>
            <person name="Lindsay R."/>
            <person name="Hauser H."/>
            <person name="James K.D."/>
            <person name="Quiles M."/>
            <person name="Madan Babu M."/>
            <person name="Saito T."/>
            <person name="Buchrieser C."/>
            <person name="Wardroper A."/>
            <person name="Felder M."/>
            <person name="Thangavelu M."/>
            <person name="Johnson D."/>
            <person name="Knights A."/>
            <person name="Loulseged H."/>
            <person name="Mungall K.L."/>
            <person name="Oliver K."/>
            <person name="Price C."/>
            <person name="Quail M.A."/>
            <person name="Urushihara H."/>
            <person name="Hernandez J."/>
            <person name="Rabbinowitsch E."/>
            <person name="Steffen D."/>
            <person name="Sanders M."/>
            <person name="Ma J."/>
            <person name="Kohara Y."/>
            <person name="Sharp S."/>
            <person name="Simmonds M.N."/>
            <person name="Spiegler S."/>
            <person name="Tivey A."/>
            <person name="Sugano S."/>
            <person name="White B."/>
            <person name="Walker D."/>
            <person name="Woodward J.R."/>
            <person name="Winckler T."/>
            <person name="Tanaka Y."/>
            <person name="Shaulsky G."/>
            <person name="Schleicher M."/>
            <person name="Weinstock G.M."/>
            <person name="Rosenthal A."/>
            <person name="Cox E.C."/>
            <person name="Chisholm R.L."/>
            <person name="Gibbs R.A."/>
            <person name="Loomis W.F."/>
            <person name="Platzer M."/>
            <person name="Kay R.R."/>
            <person name="Williams J.G."/>
            <person name="Dear P.H."/>
            <person name="Noegel A.A."/>
            <person name="Barrell B.G."/>
            <person name="Kuspa A."/>
        </authorList>
    </citation>
    <scope>NUCLEOTIDE SEQUENCE [LARGE SCALE GENOMIC DNA]</scope>
    <source>
        <strain>AX4</strain>
    </source>
</reference>